<sequence>MAQLFFKYGAMNSGKTIEILKVAHNYEEQDKPVVLMTSGLDTRDGVGKVSSRIGLRRDAIPIFEETNVFDLINDLSYKPFCVLVDECQFLNKHHVIEFARIVDELDIPVMAFGLKNDFRNELFEGSKYLLLYADKLEELKTICWFCHKKATMNLHYIDGNPVYEGDQVQIGGNEAYYPVCRKHYFHPKTVNEEQ</sequence>
<name>KITH_ENTFA</name>
<keyword id="KW-0067">ATP-binding</keyword>
<keyword id="KW-0963">Cytoplasm</keyword>
<keyword id="KW-0237">DNA synthesis</keyword>
<keyword id="KW-0418">Kinase</keyword>
<keyword id="KW-0479">Metal-binding</keyword>
<keyword id="KW-0547">Nucleotide-binding</keyword>
<keyword id="KW-1185">Reference proteome</keyword>
<keyword id="KW-0808">Transferase</keyword>
<keyword id="KW-0862">Zinc</keyword>
<dbReference type="EC" id="2.7.1.21" evidence="1"/>
<dbReference type="EMBL" id="AE016830">
    <property type="protein sequence ID" value="AAO82267.1"/>
    <property type="molecule type" value="Genomic_DNA"/>
</dbReference>
<dbReference type="RefSeq" id="NP_816197.1">
    <property type="nucleotide sequence ID" value="NC_004668.1"/>
</dbReference>
<dbReference type="RefSeq" id="WP_002387135.1">
    <property type="nucleotide sequence ID" value="NZ_KE136528.1"/>
</dbReference>
<dbReference type="SMR" id="Q831F5"/>
<dbReference type="STRING" id="226185.EF_2555"/>
<dbReference type="EnsemblBacteria" id="AAO82267">
    <property type="protein sequence ID" value="AAO82267"/>
    <property type="gene ID" value="EF_2555"/>
</dbReference>
<dbReference type="KEGG" id="efa:EF2555"/>
<dbReference type="PATRIC" id="fig|226185.45.peg.996"/>
<dbReference type="eggNOG" id="COG1435">
    <property type="taxonomic scope" value="Bacteria"/>
</dbReference>
<dbReference type="HOGENOM" id="CLU_064400_2_2_9"/>
<dbReference type="Proteomes" id="UP000001415">
    <property type="component" value="Chromosome"/>
</dbReference>
<dbReference type="GO" id="GO:0005829">
    <property type="term" value="C:cytosol"/>
    <property type="evidence" value="ECO:0007669"/>
    <property type="project" value="TreeGrafter"/>
</dbReference>
<dbReference type="GO" id="GO:0005524">
    <property type="term" value="F:ATP binding"/>
    <property type="evidence" value="ECO:0007669"/>
    <property type="project" value="UniProtKB-UniRule"/>
</dbReference>
<dbReference type="GO" id="GO:0004797">
    <property type="term" value="F:thymidine kinase activity"/>
    <property type="evidence" value="ECO:0007669"/>
    <property type="project" value="UniProtKB-UniRule"/>
</dbReference>
<dbReference type="GO" id="GO:0008270">
    <property type="term" value="F:zinc ion binding"/>
    <property type="evidence" value="ECO:0007669"/>
    <property type="project" value="UniProtKB-UniRule"/>
</dbReference>
<dbReference type="GO" id="GO:0071897">
    <property type="term" value="P:DNA biosynthetic process"/>
    <property type="evidence" value="ECO:0007669"/>
    <property type="project" value="UniProtKB-KW"/>
</dbReference>
<dbReference type="GO" id="GO:0046104">
    <property type="term" value="P:thymidine metabolic process"/>
    <property type="evidence" value="ECO:0007669"/>
    <property type="project" value="TreeGrafter"/>
</dbReference>
<dbReference type="Gene3D" id="3.30.60.20">
    <property type="match status" value="1"/>
</dbReference>
<dbReference type="Gene3D" id="3.40.50.300">
    <property type="entry name" value="P-loop containing nucleotide triphosphate hydrolases"/>
    <property type="match status" value="1"/>
</dbReference>
<dbReference type="HAMAP" id="MF_00124">
    <property type="entry name" value="Thymidine_kinase"/>
    <property type="match status" value="1"/>
</dbReference>
<dbReference type="InterPro" id="IPR027417">
    <property type="entry name" value="P-loop_NTPase"/>
</dbReference>
<dbReference type="InterPro" id="IPR001267">
    <property type="entry name" value="Thymidine_kinase"/>
</dbReference>
<dbReference type="InterPro" id="IPR020633">
    <property type="entry name" value="Thymidine_kinase_CS"/>
</dbReference>
<dbReference type="NCBIfam" id="NF003299">
    <property type="entry name" value="PRK04296.1-4"/>
    <property type="match status" value="1"/>
</dbReference>
<dbReference type="NCBIfam" id="NF003300">
    <property type="entry name" value="PRK04296.1-5"/>
    <property type="match status" value="1"/>
</dbReference>
<dbReference type="PANTHER" id="PTHR11441">
    <property type="entry name" value="THYMIDINE KINASE"/>
    <property type="match status" value="1"/>
</dbReference>
<dbReference type="PANTHER" id="PTHR11441:SF0">
    <property type="entry name" value="THYMIDINE KINASE, CYTOSOLIC"/>
    <property type="match status" value="1"/>
</dbReference>
<dbReference type="Pfam" id="PF00265">
    <property type="entry name" value="TK"/>
    <property type="match status" value="1"/>
</dbReference>
<dbReference type="PIRSF" id="PIRSF035805">
    <property type="entry name" value="TK_cell"/>
    <property type="match status" value="1"/>
</dbReference>
<dbReference type="SUPFAM" id="SSF57716">
    <property type="entry name" value="Glucocorticoid receptor-like (DNA-binding domain)"/>
    <property type="match status" value="1"/>
</dbReference>
<dbReference type="SUPFAM" id="SSF52540">
    <property type="entry name" value="P-loop containing nucleoside triphosphate hydrolases"/>
    <property type="match status" value="1"/>
</dbReference>
<dbReference type="PROSITE" id="PS00603">
    <property type="entry name" value="TK_CELLULAR_TYPE"/>
    <property type="match status" value="1"/>
</dbReference>
<reference key="1">
    <citation type="journal article" date="2003" name="Science">
        <title>Role of mobile DNA in the evolution of vancomycin-resistant Enterococcus faecalis.</title>
        <authorList>
            <person name="Paulsen I.T."/>
            <person name="Banerjei L."/>
            <person name="Myers G.S.A."/>
            <person name="Nelson K.E."/>
            <person name="Seshadri R."/>
            <person name="Read T.D."/>
            <person name="Fouts D.E."/>
            <person name="Eisen J.A."/>
            <person name="Gill S.R."/>
            <person name="Heidelberg J.F."/>
            <person name="Tettelin H."/>
            <person name="Dodson R.J."/>
            <person name="Umayam L.A."/>
            <person name="Brinkac L.M."/>
            <person name="Beanan M.J."/>
            <person name="Daugherty S.C."/>
            <person name="DeBoy R.T."/>
            <person name="Durkin S.A."/>
            <person name="Kolonay J.F."/>
            <person name="Madupu R."/>
            <person name="Nelson W.C."/>
            <person name="Vamathevan J.J."/>
            <person name="Tran B."/>
            <person name="Upton J."/>
            <person name="Hansen T."/>
            <person name="Shetty J."/>
            <person name="Khouri H.M."/>
            <person name="Utterback T.R."/>
            <person name="Radune D."/>
            <person name="Ketchum K.A."/>
            <person name="Dougherty B.A."/>
            <person name="Fraser C.M."/>
        </authorList>
    </citation>
    <scope>NUCLEOTIDE SEQUENCE [LARGE SCALE GENOMIC DNA]</scope>
    <source>
        <strain>ATCC 700802 / V583</strain>
    </source>
</reference>
<gene>
    <name evidence="1" type="primary">tdk</name>
    <name type="ordered locus">EF_2555</name>
</gene>
<protein>
    <recommendedName>
        <fullName evidence="1">Thymidine kinase</fullName>
        <ecNumber evidence="1">2.7.1.21</ecNumber>
    </recommendedName>
</protein>
<feature type="chain" id="PRO_0000174974" description="Thymidine kinase">
    <location>
        <begin position="1"/>
        <end position="194"/>
    </location>
</feature>
<feature type="active site" description="Proton acceptor" evidence="1">
    <location>
        <position position="86"/>
    </location>
</feature>
<feature type="binding site" evidence="1">
    <location>
        <begin position="9"/>
        <end position="16"/>
    </location>
    <ligand>
        <name>ATP</name>
        <dbReference type="ChEBI" id="CHEBI:30616"/>
    </ligand>
</feature>
<feature type="binding site" evidence="1">
    <location>
        <begin position="85"/>
        <end position="88"/>
    </location>
    <ligand>
        <name>ATP</name>
        <dbReference type="ChEBI" id="CHEBI:30616"/>
    </ligand>
</feature>
<feature type="binding site" evidence="1">
    <location>
        <position position="143"/>
    </location>
    <ligand>
        <name>Zn(2+)</name>
        <dbReference type="ChEBI" id="CHEBI:29105"/>
    </ligand>
</feature>
<feature type="binding site" evidence="1">
    <location>
        <position position="146"/>
    </location>
    <ligand>
        <name>Zn(2+)</name>
        <dbReference type="ChEBI" id="CHEBI:29105"/>
    </ligand>
</feature>
<feature type="binding site" evidence="1">
    <location>
        <position position="180"/>
    </location>
    <ligand>
        <name>Zn(2+)</name>
        <dbReference type="ChEBI" id="CHEBI:29105"/>
    </ligand>
</feature>
<feature type="binding site" evidence="1">
    <location>
        <position position="183"/>
    </location>
    <ligand>
        <name>Zn(2+)</name>
        <dbReference type="ChEBI" id="CHEBI:29105"/>
    </ligand>
</feature>
<evidence type="ECO:0000255" key="1">
    <source>
        <dbReference type="HAMAP-Rule" id="MF_00124"/>
    </source>
</evidence>
<proteinExistence type="inferred from homology"/>
<accession>Q831F5</accession>
<comment type="catalytic activity">
    <reaction evidence="1">
        <text>thymidine + ATP = dTMP + ADP + H(+)</text>
        <dbReference type="Rhea" id="RHEA:19129"/>
        <dbReference type="ChEBI" id="CHEBI:15378"/>
        <dbReference type="ChEBI" id="CHEBI:17748"/>
        <dbReference type="ChEBI" id="CHEBI:30616"/>
        <dbReference type="ChEBI" id="CHEBI:63528"/>
        <dbReference type="ChEBI" id="CHEBI:456216"/>
        <dbReference type="EC" id="2.7.1.21"/>
    </reaction>
</comment>
<comment type="subunit">
    <text evidence="1">Homotetramer.</text>
</comment>
<comment type="subcellular location">
    <subcellularLocation>
        <location evidence="1">Cytoplasm</location>
    </subcellularLocation>
</comment>
<comment type="similarity">
    <text evidence="1">Belongs to the thymidine kinase family.</text>
</comment>
<organism>
    <name type="scientific">Enterococcus faecalis (strain ATCC 700802 / V583)</name>
    <dbReference type="NCBI Taxonomy" id="226185"/>
    <lineage>
        <taxon>Bacteria</taxon>
        <taxon>Bacillati</taxon>
        <taxon>Bacillota</taxon>
        <taxon>Bacilli</taxon>
        <taxon>Lactobacillales</taxon>
        <taxon>Enterococcaceae</taxon>
        <taxon>Enterococcus</taxon>
    </lineage>
</organism>